<feature type="chain" id="PRO_0000286419" description="Protein HIR2">
    <location>
        <begin position="1"/>
        <end position="1017"/>
    </location>
</feature>
<feature type="repeat" description="WD 1">
    <location>
        <begin position="10"/>
        <end position="49"/>
    </location>
</feature>
<feature type="repeat" description="WD 2">
    <location>
        <begin position="74"/>
        <end position="117"/>
    </location>
</feature>
<feature type="repeat" description="WD 3">
    <location>
        <begin position="124"/>
        <end position="163"/>
    </location>
</feature>
<feature type="repeat" description="WD 4">
    <location>
        <begin position="167"/>
        <end position="208"/>
    </location>
</feature>
<feature type="repeat" description="WD 5">
    <location>
        <begin position="228"/>
        <end position="271"/>
    </location>
</feature>
<feature type="repeat" description="WD 6">
    <location>
        <begin position="275"/>
        <end position="326"/>
    </location>
</feature>
<feature type="repeat" description="WD 7">
    <location>
        <begin position="330"/>
        <end position="371"/>
    </location>
</feature>
<feature type="region of interest" description="Disordered" evidence="2">
    <location>
        <begin position="417"/>
        <end position="561"/>
    </location>
</feature>
<feature type="compositionally biased region" description="Acidic residues" evidence="2">
    <location>
        <begin position="473"/>
        <end position="483"/>
    </location>
</feature>
<feature type="compositionally biased region" description="Polar residues" evidence="2">
    <location>
        <begin position="518"/>
        <end position="535"/>
    </location>
</feature>
<feature type="compositionally biased region" description="Polar residues" evidence="2">
    <location>
        <begin position="545"/>
        <end position="561"/>
    </location>
</feature>
<dbReference type="EMBL" id="CP017627">
    <property type="protein sequence ID" value="AOW29700.1"/>
    <property type="molecule type" value="Genomic_DNA"/>
</dbReference>
<dbReference type="RefSeq" id="XP_720603.2">
    <property type="nucleotide sequence ID" value="XM_715510.2"/>
</dbReference>
<dbReference type="SMR" id="Q5AGM0"/>
<dbReference type="FunCoup" id="Q5AGM0">
    <property type="interactions" value="466"/>
</dbReference>
<dbReference type="STRING" id="237561.Q5AGM0"/>
<dbReference type="EnsemblFungi" id="C5_02750C_A-T">
    <property type="protein sequence ID" value="C5_02750C_A-T-p1"/>
    <property type="gene ID" value="C5_02750C_A"/>
</dbReference>
<dbReference type="GeneID" id="3637740"/>
<dbReference type="KEGG" id="cal:CAALFM_C502750CA"/>
<dbReference type="CGD" id="CAL0000181007">
    <property type="gene designation" value="HIR2"/>
</dbReference>
<dbReference type="VEuPathDB" id="FungiDB:C5_02750C_A"/>
<dbReference type="eggNOG" id="KOG0973">
    <property type="taxonomic scope" value="Eukaryota"/>
</dbReference>
<dbReference type="HOGENOM" id="CLU_004372_3_0_1"/>
<dbReference type="InParanoid" id="Q5AGM0"/>
<dbReference type="OrthoDB" id="1741719at2759"/>
<dbReference type="PRO" id="PR:Q5AGM0"/>
<dbReference type="Proteomes" id="UP000000559">
    <property type="component" value="Chromosome 5"/>
</dbReference>
<dbReference type="GO" id="GO:0000785">
    <property type="term" value="C:chromatin"/>
    <property type="evidence" value="ECO:0000318"/>
    <property type="project" value="GO_Central"/>
</dbReference>
<dbReference type="GO" id="GO:0000417">
    <property type="term" value="C:HIR complex"/>
    <property type="evidence" value="ECO:0000318"/>
    <property type="project" value="GO_Central"/>
</dbReference>
<dbReference type="GO" id="GO:0005634">
    <property type="term" value="C:nucleus"/>
    <property type="evidence" value="ECO:0007669"/>
    <property type="project" value="UniProtKB-SubCell"/>
</dbReference>
<dbReference type="GO" id="GO:0006338">
    <property type="term" value="P:chromatin remodeling"/>
    <property type="evidence" value="ECO:0000318"/>
    <property type="project" value="GO_Central"/>
</dbReference>
<dbReference type="GO" id="GO:0006351">
    <property type="term" value="P:DNA-templated transcription"/>
    <property type="evidence" value="ECO:0007669"/>
    <property type="project" value="InterPro"/>
</dbReference>
<dbReference type="GO" id="GO:0030448">
    <property type="term" value="P:hyphal growth"/>
    <property type="evidence" value="ECO:0000315"/>
    <property type="project" value="CGD"/>
</dbReference>
<dbReference type="GO" id="GO:0090033">
    <property type="term" value="P:positive regulation of filamentous growth"/>
    <property type="evidence" value="ECO:0000315"/>
    <property type="project" value="CGD"/>
</dbReference>
<dbReference type="GO" id="GO:0006355">
    <property type="term" value="P:regulation of DNA-templated transcription"/>
    <property type="evidence" value="ECO:0007669"/>
    <property type="project" value="InterPro"/>
</dbReference>
<dbReference type="Gene3D" id="2.130.10.10">
    <property type="entry name" value="YVTN repeat-like/Quinoprotein amine dehydrogenase"/>
    <property type="match status" value="2"/>
</dbReference>
<dbReference type="InterPro" id="IPR031120">
    <property type="entry name" value="HIR1-like"/>
</dbReference>
<dbReference type="InterPro" id="IPR011494">
    <property type="entry name" value="HIRA-like_C"/>
</dbReference>
<dbReference type="InterPro" id="IPR019015">
    <property type="entry name" value="HIRA_B_motif"/>
</dbReference>
<dbReference type="InterPro" id="IPR015943">
    <property type="entry name" value="WD40/YVTN_repeat-like_dom_sf"/>
</dbReference>
<dbReference type="InterPro" id="IPR019775">
    <property type="entry name" value="WD40_repeat_CS"/>
</dbReference>
<dbReference type="InterPro" id="IPR036322">
    <property type="entry name" value="WD40_repeat_dom_sf"/>
</dbReference>
<dbReference type="InterPro" id="IPR001680">
    <property type="entry name" value="WD40_rpt"/>
</dbReference>
<dbReference type="PANTHER" id="PTHR13831">
    <property type="entry name" value="MEMBER OF THE HIR1 FAMILY OF WD-REPEAT PROTEINS"/>
    <property type="match status" value="1"/>
</dbReference>
<dbReference type="PANTHER" id="PTHR13831:SF1">
    <property type="entry name" value="PROTEIN HIR2"/>
    <property type="match status" value="1"/>
</dbReference>
<dbReference type="Pfam" id="PF07569">
    <property type="entry name" value="Hira"/>
    <property type="match status" value="1"/>
</dbReference>
<dbReference type="Pfam" id="PF09453">
    <property type="entry name" value="HIRA_B"/>
    <property type="match status" value="1"/>
</dbReference>
<dbReference type="Pfam" id="PF00400">
    <property type="entry name" value="WD40"/>
    <property type="match status" value="2"/>
</dbReference>
<dbReference type="SMART" id="SM00320">
    <property type="entry name" value="WD40"/>
    <property type="match status" value="6"/>
</dbReference>
<dbReference type="SUPFAM" id="SSF50978">
    <property type="entry name" value="WD40 repeat-like"/>
    <property type="match status" value="1"/>
</dbReference>
<dbReference type="PROSITE" id="PS00678">
    <property type="entry name" value="WD_REPEATS_1"/>
    <property type="match status" value="2"/>
</dbReference>
<dbReference type="PROSITE" id="PS50082">
    <property type="entry name" value="WD_REPEATS_2"/>
    <property type="match status" value="1"/>
</dbReference>
<dbReference type="PROSITE" id="PS50294">
    <property type="entry name" value="WD_REPEATS_REGION"/>
    <property type="match status" value="1"/>
</dbReference>
<name>HIR2_CANAL</name>
<gene>
    <name type="primary">HIR2</name>
    <name type="ordered locus">CAALFM_C502750CA</name>
    <name type="ORF">CaO19.11771</name>
    <name type="ORF">CaO19.4295</name>
</gene>
<organism>
    <name type="scientific">Candida albicans (strain SC5314 / ATCC MYA-2876)</name>
    <name type="common">Yeast</name>
    <dbReference type="NCBI Taxonomy" id="237561"/>
    <lineage>
        <taxon>Eukaryota</taxon>
        <taxon>Fungi</taxon>
        <taxon>Dikarya</taxon>
        <taxon>Ascomycota</taxon>
        <taxon>Saccharomycotina</taxon>
        <taxon>Pichiomycetes</taxon>
        <taxon>Debaryomycetaceae</taxon>
        <taxon>Candida/Lodderomyces clade</taxon>
        <taxon>Candida</taxon>
    </lineage>
</organism>
<comment type="function">
    <text evidence="1">Required for replication-independent chromatin assembly and for the periodic repression of histone gene transcription during the cell cycle.</text>
</comment>
<comment type="subcellular location">
    <subcellularLocation>
        <location evidence="1">Nucleus</location>
    </subcellularLocation>
</comment>
<comment type="similarity">
    <text evidence="3">Belongs to the WD repeat HIR1 family.</text>
</comment>
<protein>
    <recommendedName>
        <fullName>Protein HIR2</fullName>
    </recommendedName>
</protein>
<keyword id="KW-0156">Chromatin regulator</keyword>
<keyword id="KW-0539">Nucleus</keyword>
<keyword id="KW-1185">Reference proteome</keyword>
<keyword id="KW-0677">Repeat</keyword>
<keyword id="KW-0678">Repressor</keyword>
<keyword id="KW-0804">Transcription</keyword>
<keyword id="KW-0805">Transcription regulation</keyword>
<keyword id="KW-0853">WD repeat</keyword>
<sequence length="1017" mass="114476">MKFLKLPQSYHNGGIHSIDVNQDNTILVSGGTDNKIGVWNLKKLIELSKLVSTHNSPEVRLKLKSLEPKQYITCHKSLINVVRFFKGDNKRFISSDVNGNVFFHTLHEQPETKQLFPFKSIETSEVNPVVDLTISADNRLIAWSTNNGKVYLYDVVKDTFQELTSICHEKPIIQRSIAFDPSNNYLITVGDDTQINVFQYSYEKDDTSTTTYKFRLIYKISKLFSQNPLNVRYKRISWSPDGNLVSIPTASKNQTMLISLISRSEKWTNIESLVGHDFACDVVKFNPKIFSSKENDTSKVHSVIASGGSDRTMAIWNTSKSTPITVLQDAVQGEILDITWTTDGTSLLFCTSQGKLCIGNFEPNELGYTFSQETMERFVQLQNNLIEPMNFRYPHEQTVGNRKQLPPIEFLSQKNAISTTTSSSNTVENDKKNAEDNVGVSNQSKSTTTTTTTTIKGGVITPEVIPPPKLQSLDDDIDGDGDDEEHKSGGMLDSVMNDRTQSSPRKLNKPKPIAPVVSDSTTQSLSFNKQKVTTKNGKRRIQPMLISSGNSAPSDLPRSNSVIKPVVNTTKSTMEFEKPSYSVSEEFYKQNKRPRTEETTGSNNNKKLKREMEPVKFIGSVILNPNTSFSKIRLATPKVRLFFQLKSKTDDDGVFILDIKNGSGNESKPSRLTYMKKDKEIWCDFIPKYIQLATEGSNFWAVTTVDGTILTYSHVSGKRLLPSIVLGSPISFLESYDKYLMVVTCIGELYVWDMEIKKNVLKSSISPLLELYNKEGLVKSDNITLCAVTSYGIPLVTLSNGSGYLFNKDLGVWQTITESWWCFGSHYWDSTQTGNSSGGGGGSGGSNNKRSLQTMNMFNDEQSIIELLEHKTNEEILRKTRTGRGKYFNKISKNMLMKEGFESLENTISISHLENRILCCELLGENKDFHKFFTTYVQRICELGFKAKLFEVCDELLGPIDTDTAKPPNENNWEPKICGFDKRELLKEIITSCSQFRDAQRVLVHFGKKIGVVIDES</sequence>
<evidence type="ECO:0000250" key="1"/>
<evidence type="ECO:0000256" key="2">
    <source>
        <dbReference type="SAM" id="MobiDB-lite"/>
    </source>
</evidence>
<evidence type="ECO:0000305" key="3"/>
<proteinExistence type="inferred from homology"/>
<accession>Q5AGM0</accession>
<accession>A0A1D8PNI8</accession>
<accession>Q5AG84</accession>
<reference key="1">
    <citation type="journal article" date="2004" name="Proc. Natl. Acad. Sci. U.S.A.">
        <title>The diploid genome sequence of Candida albicans.</title>
        <authorList>
            <person name="Jones T."/>
            <person name="Federspiel N.A."/>
            <person name="Chibana H."/>
            <person name="Dungan J."/>
            <person name="Kalman S."/>
            <person name="Magee B.B."/>
            <person name="Newport G."/>
            <person name="Thorstenson Y.R."/>
            <person name="Agabian N."/>
            <person name="Magee P.T."/>
            <person name="Davis R.W."/>
            <person name="Scherer S."/>
        </authorList>
    </citation>
    <scope>NUCLEOTIDE SEQUENCE [LARGE SCALE GENOMIC DNA]</scope>
    <source>
        <strain>SC5314 / ATCC MYA-2876</strain>
    </source>
</reference>
<reference key="2">
    <citation type="journal article" date="2007" name="Genome Biol.">
        <title>Assembly of the Candida albicans genome into sixteen supercontigs aligned on the eight chromosomes.</title>
        <authorList>
            <person name="van het Hoog M."/>
            <person name="Rast T.J."/>
            <person name="Martchenko M."/>
            <person name="Grindle S."/>
            <person name="Dignard D."/>
            <person name="Hogues H."/>
            <person name="Cuomo C."/>
            <person name="Berriman M."/>
            <person name="Scherer S."/>
            <person name="Magee B.B."/>
            <person name="Whiteway M."/>
            <person name="Chibana H."/>
            <person name="Nantel A."/>
            <person name="Magee P.T."/>
        </authorList>
    </citation>
    <scope>GENOME REANNOTATION</scope>
    <source>
        <strain>SC5314 / ATCC MYA-2876</strain>
    </source>
</reference>
<reference key="3">
    <citation type="journal article" date="2013" name="Genome Biol.">
        <title>Assembly of a phased diploid Candida albicans genome facilitates allele-specific measurements and provides a simple model for repeat and indel structure.</title>
        <authorList>
            <person name="Muzzey D."/>
            <person name="Schwartz K."/>
            <person name="Weissman J.S."/>
            <person name="Sherlock G."/>
        </authorList>
    </citation>
    <scope>NUCLEOTIDE SEQUENCE [LARGE SCALE GENOMIC DNA]</scope>
    <scope>GENOME REANNOTATION</scope>
    <source>
        <strain>SC5314 / ATCC MYA-2876</strain>
    </source>
</reference>